<proteinExistence type="inferred from homology"/>
<protein>
    <recommendedName>
        <fullName>Probable plasmid-partitioning protein ParB</fullName>
    </recommendedName>
</protein>
<feature type="chain" id="PRO_0000422779" description="Probable plasmid-partitioning protein ParB">
    <location>
        <begin position="1"/>
        <end position="297"/>
    </location>
</feature>
<evidence type="ECO:0000250" key="1"/>
<evidence type="ECO:0000305" key="2"/>
<dbReference type="EMBL" id="AE017222">
    <property type="protein sequence ID" value="AAS82413.1"/>
    <property type="molecule type" value="Genomic_DNA"/>
</dbReference>
<dbReference type="RefSeq" id="WP_011174478.1">
    <property type="nucleotide sequence ID" value="NC_005838.1"/>
</dbReference>
<dbReference type="SMR" id="Q746H2"/>
<dbReference type="KEGG" id="tth:TT_P0083"/>
<dbReference type="eggNOG" id="COG1475">
    <property type="taxonomic scope" value="Bacteria"/>
</dbReference>
<dbReference type="HOGENOM" id="CLU_023853_4_0_0"/>
<dbReference type="OrthoDB" id="9802051at2"/>
<dbReference type="Proteomes" id="UP000000592">
    <property type="component" value="Plasmid pTT27"/>
</dbReference>
<dbReference type="GO" id="GO:0005694">
    <property type="term" value="C:chromosome"/>
    <property type="evidence" value="ECO:0007669"/>
    <property type="project" value="TreeGrafter"/>
</dbReference>
<dbReference type="GO" id="GO:0003677">
    <property type="term" value="F:DNA binding"/>
    <property type="evidence" value="ECO:0007669"/>
    <property type="project" value="UniProtKB-KW"/>
</dbReference>
<dbReference type="GO" id="GO:0007059">
    <property type="term" value="P:chromosome segregation"/>
    <property type="evidence" value="ECO:0007669"/>
    <property type="project" value="UniProtKB-KW"/>
</dbReference>
<dbReference type="FunFam" id="3.90.1530.30:FF:000001">
    <property type="entry name" value="Chromosome partitioning protein ParB"/>
    <property type="match status" value="1"/>
</dbReference>
<dbReference type="Gene3D" id="1.10.10.2830">
    <property type="match status" value="1"/>
</dbReference>
<dbReference type="Gene3D" id="3.90.1530.30">
    <property type="match status" value="1"/>
</dbReference>
<dbReference type="InterPro" id="IPR050336">
    <property type="entry name" value="Chromosome_partition/occlusion"/>
</dbReference>
<dbReference type="InterPro" id="IPR004437">
    <property type="entry name" value="ParB/RepB/Spo0J"/>
</dbReference>
<dbReference type="InterPro" id="IPR003115">
    <property type="entry name" value="ParB/Sulfiredoxin_dom"/>
</dbReference>
<dbReference type="InterPro" id="IPR036086">
    <property type="entry name" value="ParB/Sulfiredoxin_sf"/>
</dbReference>
<dbReference type="NCBIfam" id="TIGR00180">
    <property type="entry name" value="parB_part"/>
    <property type="match status" value="1"/>
</dbReference>
<dbReference type="PANTHER" id="PTHR33375:SF7">
    <property type="entry name" value="CHROMOSOME 2-PARTITIONING PROTEIN PARB-RELATED"/>
    <property type="match status" value="1"/>
</dbReference>
<dbReference type="PANTHER" id="PTHR33375">
    <property type="entry name" value="CHROMOSOME-PARTITIONING PROTEIN PARB-RELATED"/>
    <property type="match status" value="1"/>
</dbReference>
<dbReference type="Pfam" id="PF02195">
    <property type="entry name" value="ParBc"/>
    <property type="match status" value="1"/>
</dbReference>
<dbReference type="SMART" id="SM00470">
    <property type="entry name" value="ParB"/>
    <property type="match status" value="1"/>
</dbReference>
<dbReference type="SUPFAM" id="SSF109709">
    <property type="entry name" value="KorB DNA-binding domain-like"/>
    <property type="match status" value="1"/>
</dbReference>
<dbReference type="SUPFAM" id="SSF110849">
    <property type="entry name" value="ParB/Sulfiredoxin"/>
    <property type="match status" value="1"/>
</dbReference>
<accession>Q746H2</accession>
<geneLocation type="plasmid">
    <name>pTT27</name>
</geneLocation>
<gene>
    <name type="primary">parB</name>
    <name type="ordered locus">TT_P0083</name>
</gene>
<organism>
    <name type="scientific">Thermus thermophilus (strain ATCC BAA-163 / DSM 7039 / HB27)</name>
    <dbReference type="NCBI Taxonomy" id="262724"/>
    <lineage>
        <taxon>Bacteria</taxon>
        <taxon>Thermotogati</taxon>
        <taxon>Deinococcota</taxon>
        <taxon>Deinococci</taxon>
        <taxon>Thermales</taxon>
        <taxon>Thermaceae</taxon>
        <taxon>Thermus</taxon>
    </lineage>
</organism>
<keyword id="KW-0159">Chromosome partition</keyword>
<keyword id="KW-0238">DNA-binding</keyword>
<keyword id="KW-0614">Plasmid</keyword>
<name>PARB_THET2</name>
<sequence>MSRLDEVLGTAILKGKKALGKEAPEVLRLPLDLLRVRGQPRRRFENLEALAESIREKGILQPLLVRRVGEAYEVVAGERRLRAAAMAGLKEVPARVLDLSEKEARLLALVENLQREDLNPYEETLGVLALLSEDLGKSVEEVVGLLRKMKNAKEGRVRDNVVPTAEAQRVEELFKALGRMSWESFVQHRLPLLSLPEDLKAALEEGAIPYTAALELKKVKDASLRKALLEEVKAGLSLRELKARVRGVLRKEKAPRPWPKEVAAKLARLDLEALPPERRARVEELLAELERVLEGPR</sequence>
<reference key="1">
    <citation type="journal article" date="2004" name="Nat. Biotechnol.">
        <title>The genome sequence of the extreme thermophile Thermus thermophilus.</title>
        <authorList>
            <person name="Henne A."/>
            <person name="Brueggemann H."/>
            <person name="Raasch C."/>
            <person name="Wiezer A."/>
            <person name="Hartsch T."/>
            <person name="Liesegang H."/>
            <person name="Johann A."/>
            <person name="Lienard T."/>
            <person name="Gohl O."/>
            <person name="Martinez-Arias R."/>
            <person name="Jacobi C."/>
            <person name="Starkuviene V."/>
            <person name="Schlenczeck S."/>
            <person name="Dencker S."/>
            <person name="Huber R."/>
            <person name="Klenk H.-P."/>
            <person name="Kramer W."/>
            <person name="Merkl R."/>
            <person name="Gottschalk G."/>
            <person name="Fritz H.-J."/>
        </authorList>
    </citation>
    <scope>NUCLEOTIDE SEQUENCE [LARGE SCALE GENOMIC DNA]</scope>
    <source>
        <strain>ATCC BAA-163 / DSM 7039 / HB27</strain>
    </source>
</reference>
<comment type="function">
    <text evidence="1">Probably involved in plasmid DNA partitioning.</text>
</comment>
<comment type="similarity">
    <text evidence="2">Belongs to the ParB family.</text>
</comment>